<gene>
    <name evidence="1" type="primary">ispG</name>
    <name type="ordered locus">Lferr_1605</name>
</gene>
<organism>
    <name type="scientific">Acidithiobacillus ferrooxidans (strain ATCC 53993 / BNL-5-31)</name>
    <name type="common">Leptospirillum ferrooxidans (ATCC 53993)</name>
    <dbReference type="NCBI Taxonomy" id="380394"/>
    <lineage>
        <taxon>Bacteria</taxon>
        <taxon>Pseudomonadati</taxon>
        <taxon>Pseudomonadota</taxon>
        <taxon>Acidithiobacillia</taxon>
        <taxon>Acidithiobacillales</taxon>
        <taxon>Acidithiobacillaceae</taxon>
        <taxon>Acidithiobacillus</taxon>
    </lineage>
</organism>
<dbReference type="EC" id="1.17.7.3" evidence="1"/>
<dbReference type="EMBL" id="CP001132">
    <property type="protein sequence ID" value="ACH83827.1"/>
    <property type="molecule type" value="Genomic_DNA"/>
</dbReference>
<dbReference type="RefSeq" id="WP_009564018.1">
    <property type="nucleotide sequence ID" value="NC_011206.1"/>
</dbReference>
<dbReference type="SMR" id="B5EJF3"/>
<dbReference type="GeneID" id="65281086"/>
<dbReference type="KEGG" id="afe:Lferr_1605"/>
<dbReference type="eggNOG" id="COG0821">
    <property type="taxonomic scope" value="Bacteria"/>
</dbReference>
<dbReference type="HOGENOM" id="CLU_042258_0_0_6"/>
<dbReference type="UniPathway" id="UPA00056">
    <property type="reaction ID" value="UER00096"/>
</dbReference>
<dbReference type="GO" id="GO:0051539">
    <property type="term" value="F:4 iron, 4 sulfur cluster binding"/>
    <property type="evidence" value="ECO:0007669"/>
    <property type="project" value="UniProtKB-UniRule"/>
</dbReference>
<dbReference type="GO" id="GO:0046429">
    <property type="term" value="F:4-hydroxy-3-methylbut-2-en-1-yl diphosphate synthase activity (ferredoxin)"/>
    <property type="evidence" value="ECO:0007669"/>
    <property type="project" value="UniProtKB-UniRule"/>
</dbReference>
<dbReference type="GO" id="GO:0141197">
    <property type="term" value="F:4-hydroxy-3-methylbut-2-enyl-diphosphate synthase activity (flavodoxin)"/>
    <property type="evidence" value="ECO:0007669"/>
    <property type="project" value="UniProtKB-EC"/>
</dbReference>
<dbReference type="GO" id="GO:0005506">
    <property type="term" value="F:iron ion binding"/>
    <property type="evidence" value="ECO:0007669"/>
    <property type="project" value="InterPro"/>
</dbReference>
<dbReference type="GO" id="GO:0019288">
    <property type="term" value="P:isopentenyl diphosphate biosynthetic process, methylerythritol 4-phosphate pathway"/>
    <property type="evidence" value="ECO:0007669"/>
    <property type="project" value="UniProtKB-UniRule"/>
</dbReference>
<dbReference type="GO" id="GO:0016114">
    <property type="term" value="P:terpenoid biosynthetic process"/>
    <property type="evidence" value="ECO:0007669"/>
    <property type="project" value="InterPro"/>
</dbReference>
<dbReference type="FunFam" id="3.20.20.20:FF:000001">
    <property type="entry name" value="4-hydroxy-3-methylbut-2-en-1-yl diphosphate synthase (flavodoxin)"/>
    <property type="match status" value="1"/>
</dbReference>
<dbReference type="Gene3D" id="3.20.20.20">
    <property type="entry name" value="Dihydropteroate synthase-like"/>
    <property type="match status" value="1"/>
</dbReference>
<dbReference type="Gene3D" id="3.30.413.10">
    <property type="entry name" value="Sulfite Reductase Hemoprotein, domain 1"/>
    <property type="match status" value="1"/>
</dbReference>
<dbReference type="HAMAP" id="MF_00159">
    <property type="entry name" value="IspG"/>
    <property type="match status" value="1"/>
</dbReference>
<dbReference type="InterPro" id="IPR011005">
    <property type="entry name" value="Dihydropteroate_synth-like_sf"/>
</dbReference>
<dbReference type="InterPro" id="IPR036849">
    <property type="entry name" value="Enolase-like_C_sf"/>
</dbReference>
<dbReference type="InterPro" id="IPR016425">
    <property type="entry name" value="IspG_bac"/>
</dbReference>
<dbReference type="InterPro" id="IPR004588">
    <property type="entry name" value="IspG_bac-typ"/>
</dbReference>
<dbReference type="InterPro" id="IPR045854">
    <property type="entry name" value="NO2/SO3_Rdtase_4Fe4S_sf"/>
</dbReference>
<dbReference type="NCBIfam" id="TIGR00612">
    <property type="entry name" value="ispG_gcpE"/>
    <property type="match status" value="1"/>
</dbReference>
<dbReference type="NCBIfam" id="NF001540">
    <property type="entry name" value="PRK00366.1"/>
    <property type="match status" value="1"/>
</dbReference>
<dbReference type="PANTHER" id="PTHR30454">
    <property type="entry name" value="4-HYDROXY-3-METHYLBUT-2-EN-1-YL DIPHOSPHATE SYNTHASE"/>
    <property type="match status" value="1"/>
</dbReference>
<dbReference type="PANTHER" id="PTHR30454:SF0">
    <property type="entry name" value="4-HYDROXY-3-METHYLBUT-2-EN-1-YL DIPHOSPHATE SYNTHASE (FERREDOXIN), CHLOROPLASTIC"/>
    <property type="match status" value="1"/>
</dbReference>
<dbReference type="Pfam" id="PF04551">
    <property type="entry name" value="GcpE"/>
    <property type="match status" value="1"/>
</dbReference>
<dbReference type="PIRSF" id="PIRSF004640">
    <property type="entry name" value="IspG"/>
    <property type="match status" value="1"/>
</dbReference>
<dbReference type="SUPFAM" id="SSF51604">
    <property type="entry name" value="Enolase C-terminal domain-like"/>
    <property type="match status" value="1"/>
</dbReference>
<dbReference type="SUPFAM" id="SSF56014">
    <property type="entry name" value="Nitrite and sulphite reductase 4Fe-4S domain-like"/>
    <property type="match status" value="1"/>
</dbReference>
<accession>B5EJF3</accession>
<evidence type="ECO:0000255" key="1">
    <source>
        <dbReference type="HAMAP-Rule" id="MF_00159"/>
    </source>
</evidence>
<name>ISPG_ACIF5</name>
<feature type="chain" id="PRO_1000097141" description="4-hydroxy-3-methylbut-2-en-1-yl diphosphate synthase (flavodoxin)">
    <location>
        <begin position="1"/>
        <end position="366"/>
    </location>
</feature>
<feature type="binding site" evidence="1">
    <location>
        <position position="270"/>
    </location>
    <ligand>
        <name>[4Fe-4S] cluster</name>
        <dbReference type="ChEBI" id="CHEBI:49883"/>
    </ligand>
</feature>
<feature type="binding site" evidence="1">
    <location>
        <position position="273"/>
    </location>
    <ligand>
        <name>[4Fe-4S] cluster</name>
        <dbReference type="ChEBI" id="CHEBI:49883"/>
    </ligand>
</feature>
<feature type="binding site" evidence="1">
    <location>
        <position position="305"/>
    </location>
    <ligand>
        <name>[4Fe-4S] cluster</name>
        <dbReference type="ChEBI" id="CHEBI:49883"/>
    </ligand>
</feature>
<feature type="binding site" evidence="1">
    <location>
        <position position="312"/>
    </location>
    <ligand>
        <name>[4Fe-4S] cluster</name>
        <dbReference type="ChEBI" id="CHEBI:49883"/>
    </ligand>
</feature>
<comment type="function">
    <text evidence="1">Converts 2C-methyl-D-erythritol 2,4-cyclodiphosphate (ME-2,4cPP) into 1-hydroxy-2-methyl-2-(E)-butenyl 4-diphosphate.</text>
</comment>
<comment type="catalytic activity">
    <reaction evidence="1">
        <text>(2E)-4-hydroxy-3-methylbut-2-enyl diphosphate + oxidized [flavodoxin] + H2O + 2 H(+) = 2-C-methyl-D-erythritol 2,4-cyclic diphosphate + reduced [flavodoxin]</text>
        <dbReference type="Rhea" id="RHEA:43604"/>
        <dbReference type="Rhea" id="RHEA-COMP:10622"/>
        <dbReference type="Rhea" id="RHEA-COMP:10623"/>
        <dbReference type="ChEBI" id="CHEBI:15377"/>
        <dbReference type="ChEBI" id="CHEBI:15378"/>
        <dbReference type="ChEBI" id="CHEBI:57618"/>
        <dbReference type="ChEBI" id="CHEBI:58210"/>
        <dbReference type="ChEBI" id="CHEBI:58483"/>
        <dbReference type="ChEBI" id="CHEBI:128753"/>
        <dbReference type="EC" id="1.17.7.3"/>
    </reaction>
</comment>
<comment type="cofactor">
    <cofactor evidence="1">
        <name>[4Fe-4S] cluster</name>
        <dbReference type="ChEBI" id="CHEBI:49883"/>
    </cofactor>
    <text evidence="1">Binds 1 [4Fe-4S] cluster.</text>
</comment>
<comment type="pathway">
    <text evidence="1">Isoprenoid biosynthesis; isopentenyl diphosphate biosynthesis via DXP pathway; isopentenyl diphosphate from 1-deoxy-D-xylulose 5-phosphate: step 5/6.</text>
</comment>
<comment type="similarity">
    <text evidence="1">Belongs to the IspG family.</text>
</comment>
<protein>
    <recommendedName>
        <fullName evidence="1">4-hydroxy-3-methylbut-2-en-1-yl diphosphate synthase (flavodoxin)</fullName>
        <ecNumber evidence="1">1.17.7.3</ecNumber>
    </recommendedName>
    <alternativeName>
        <fullName evidence="1">1-hydroxy-2-methyl-2-(E)-butenyl 4-diphosphate synthase</fullName>
    </alternativeName>
</protein>
<proteinExistence type="inferred from homology"/>
<sequence>MHHESPIRRRKTRQIHVGKVAIGGDAPISVQSMTNTETRDIAATVAQIRRLEAVGADIVRISVPSMDAAEAFKTIRAQVETPLVADIHFDHRIALQVMEDGVDGLRINPGNIGSLDKTRLVVEMAKDKGIPIRIGVNAGSLEKDIQEKYGEPTPEALVESALRHVSILDELNFHDVKISVKASDIFLAVSAYRLLSEKVDYPLHLGITEAGGLRSGTVKSAIGLGLLLRDGIGDTIRVSLAADPVEEIRVGFDILKSLHLRQKGINLIACPSCSRQEFDVITTINALEARLEDILEPMDVSVIGCVVNGIGEAKEADIGLAGGDKRSILYYRGKQVDRVENNDIVDVLEKRIRAEIAERQATRHEG</sequence>
<reference key="1">
    <citation type="submission" date="2008-08" db="EMBL/GenBank/DDBJ databases">
        <title>Complete sequence of Acidithiobacillus ferrooxidans ATCC 53993.</title>
        <authorList>
            <person name="Lucas S."/>
            <person name="Copeland A."/>
            <person name="Lapidus A."/>
            <person name="Glavina del Rio T."/>
            <person name="Dalin E."/>
            <person name="Tice H."/>
            <person name="Bruce D."/>
            <person name="Goodwin L."/>
            <person name="Pitluck S."/>
            <person name="Sims D."/>
            <person name="Brettin T."/>
            <person name="Detter J.C."/>
            <person name="Han C."/>
            <person name="Kuske C.R."/>
            <person name="Larimer F."/>
            <person name="Land M."/>
            <person name="Hauser L."/>
            <person name="Kyrpides N."/>
            <person name="Lykidis A."/>
            <person name="Borole A.P."/>
        </authorList>
    </citation>
    <scope>NUCLEOTIDE SEQUENCE [LARGE SCALE GENOMIC DNA]</scope>
    <source>
        <strain>ATCC 53993 / BNL-5-31</strain>
    </source>
</reference>
<keyword id="KW-0004">4Fe-4S</keyword>
<keyword id="KW-0408">Iron</keyword>
<keyword id="KW-0411">Iron-sulfur</keyword>
<keyword id="KW-0414">Isoprene biosynthesis</keyword>
<keyword id="KW-0479">Metal-binding</keyword>
<keyword id="KW-0560">Oxidoreductase</keyword>